<gene>
    <name evidence="1" type="primary">tusC</name>
    <name type="ordered locus">Spro_4553</name>
</gene>
<reference key="1">
    <citation type="submission" date="2007-09" db="EMBL/GenBank/DDBJ databases">
        <title>Complete sequence of chromosome of Serratia proteamaculans 568.</title>
        <authorList>
            <consortium name="US DOE Joint Genome Institute"/>
            <person name="Copeland A."/>
            <person name="Lucas S."/>
            <person name="Lapidus A."/>
            <person name="Barry K."/>
            <person name="Glavina del Rio T."/>
            <person name="Dalin E."/>
            <person name="Tice H."/>
            <person name="Pitluck S."/>
            <person name="Chain P."/>
            <person name="Malfatti S."/>
            <person name="Shin M."/>
            <person name="Vergez L."/>
            <person name="Schmutz J."/>
            <person name="Larimer F."/>
            <person name="Land M."/>
            <person name="Hauser L."/>
            <person name="Kyrpides N."/>
            <person name="Kim E."/>
            <person name="Taghavi S."/>
            <person name="Newman L."/>
            <person name="Vangronsveld J."/>
            <person name="van der Lelie D."/>
            <person name="Richardson P."/>
        </authorList>
    </citation>
    <scope>NUCLEOTIDE SEQUENCE [LARGE SCALE GENOMIC DNA]</scope>
    <source>
        <strain>568</strain>
    </source>
</reference>
<proteinExistence type="inferred from homology"/>
<name>TUSC_SERP5</name>
<keyword id="KW-0963">Cytoplasm</keyword>
<keyword id="KW-0819">tRNA processing</keyword>
<organism>
    <name type="scientific">Serratia proteamaculans (strain 568)</name>
    <dbReference type="NCBI Taxonomy" id="399741"/>
    <lineage>
        <taxon>Bacteria</taxon>
        <taxon>Pseudomonadati</taxon>
        <taxon>Pseudomonadota</taxon>
        <taxon>Gammaproteobacteria</taxon>
        <taxon>Enterobacterales</taxon>
        <taxon>Yersiniaceae</taxon>
        <taxon>Serratia</taxon>
    </lineage>
</organism>
<sequence>MKRVAFVFTQGPHGNAGGREGLDALLATSALSEDLGVFFIGDGVLQLLPGQQPEKILARNYIATFGVLPLYDVERCYLCQASLQERGLSQVTDWVLDAEVLAPDALGQLLAGYDAVMTF</sequence>
<evidence type="ECO:0000255" key="1">
    <source>
        <dbReference type="HAMAP-Rule" id="MF_00389"/>
    </source>
</evidence>
<dbReference type="EMBL" id="CP000826">
    <property type="protein sequence ID" value="ABV43646.1"/>
    <property type="molecule type" value="Genomic_DNA"/>
</dbReference>
<dbReference type="SMR" id="A8GKK6"/>
<dbReference type="STRING" id="399741.Spro_4553"/>
<dbReference type="KEGG" id="spe:Spro_4553"/>
<dbReference type="eggNOG" id="COG2923">
    <property type="taxonomic scope" value="Bacteria"/>
</dbReference>
<dbReference type="HOGENOM" id="CLU_155943_1_0_6"/>
<dbReference type="OrthoDB" id="9789418at2"/>
<dbReference type="GO" id="GO:0005737">
    <property type="term" value="C:cytoplasm"/>
    <property type="evidence" value="ECO:0007669"/>
    <property type="project" value="UniProtKB-SubCell"/>
</dbReference>
<dbReference type="GO" id="GO:0008033">
    <property type="term" value="P:tRNA processing"/>
    <property type="evidence" value="ECO:0007669"/>
    <property type="project" value="UniProtKB-UniRule"/>
</dbReference>
<dbReference type="Gene3D" id="3.40.1260.10">
    <property type="entry name" value="DsrEFH-like"/>
    <property type="match status" value="1"/>
</dbReference>
<dbReference type="HAMAP" id="MF_00389">
    <property type="entry name" value="Thiourid_synth_C"/>
    <property type="match status" value="1"/>
</dbReference>
<dbReference type="InterPro" id="IPR027396">
    <property type="entry name" value="DsrEFH-like"/>
</dbReference>
<dbReference type="InterPro" id="IPR003787">
    <property type="entry name" value="Sulphur_relay_DsrE/F-like"/>
</dbReference>
<dbReference type="InterPro" id="IPR037450">
    <property type="entry name" value="Sulphur_relay_TusC"/>
</dbReference>
<dbReference type="InterPro" id="IPR017462">
    <property type="entry name" value="Sulphur_relay_TusC/DsrF"/>
</dbReference>
<dbReference type="NCBIfam" id="NF001238">
    <property type="entry name" value="PRK00211.1"/>
    <property type="match status" value="1"/>
</dbReference>
<dbReference type="NCBIfam" id="TIGR03010">
    <property type="entry name" value="sulf_tusC_dsrF"/>
    <property type="match status" value="1"/>
</dbReference>
<dbReference type="PANTHER" id="PTHR38780">
    <property type="entry name" value="PROTEIN TUSC"/>
    <property type="match status" value="1"/>
</dbReference>
<dbReference type="PANTHER" id="PTHR38780:SF1">
    <property type="entry name" value="PROTEIN TUSC"/>
    <property type="match status" value="1"/>
</dbReference>
<dbReference type="Pfam" id="PF02635">
    <property type="entry name" value="DsrE"/>
    <property type="match status" value="1"/>
</dbReference>
<dbReference type="SUPFAM" id="SSF75169">
    <property type="entry name" value="DsrEFH-like"/>
    <property type="match status" value="1"/>
</dbReference>
<accession>A8GKK6</accession>
<protein>
    <recommendedName>
        <fullName evidence="1">Protein TusC</fullName>
    </recommendedName>
    <alternativeName>
        <fullName evidence="1">tRNA 2-thiouridine synthesizing protein C</fullName>
    </alternativeName>
</protein>
<comment type="function">
    <text evidence="1">Part of a sulfur-relay system required for 2-thiolation of 5-methylaminomethyl-2-thiouridine (mnm(5)s(2)U) at tRNA wobble positions.</text>
</comment>
<comment type="subunit">
    <text evidence="1">Heterohexamer, formed by a dimer of trimers. The hexameric TusBCD complex contains 2 copies each of TusB, TusC and TusD. The TusBCD complex interacts with TusE.</text>
</comment>
<comment type="subcellular location">
    <subcellularLocation>
        <location evidence="1">Cytoplasm</location>
    </subcellularLocation>
</comment>
<comment type="similarity">
    <text evidence="1">Belongs to the DsrF/TusC family.</text>
</comment>
<feature type="chain" id="PRO_1000060744" description="Protein TusC">
    <location>
        <begin position="1"/>
        <end position="119"/>
    </location>
</feature>